<proteinExistence type="inferred from homology"/>
<keyword id="KW-0067">ATP-binding</keyword>
<keyword id="KW-0133">Cell shape</keyword>
<keyword id="KW-0961">Cell wall biogenesis/degradation</keyword>
<keyword id="KW-0963">Cytoplasm</keyword>
<keyword id="KW-0436">Ligase</keyword>
<keyword id="KW-0460">Magnesium</keyword>
<keyword id="KW-0464">Manganese</keyword>
<keyword id="KW-0479">Metal-binding</keyword>
<keyword id="KW-0547">Nucleotide-binding</keyword>
<keyword id="KW-0573">Peptidoglycan synthesis</keyword>
<keyword id="KW-1185">Reference proteome</keyword>
<dbReference type="EC" id="6.3.2.4" evidence="2"/>
<dbReference type="EMBL" id="CP000568">
    <property type="protein sequence ID" value="ABN53156.1"/>
    <property type="molecule type" value="Genomic_DNA"/>
</dbReference>
<dbReference type="RefSeq" id="WP_020457664.1">
    <property type="nucleotide sequence ID" value="NC_009012.1"/>
</dbReference>
<dbReference type="SMR" id="A3DGS7"/>
<dbReference type="STRING" id="203119.Cthe_1938"/>
<dbReference type="GeneID" id="35803211"/>
<dbReference type="KEGG" id="cth:Cthe_1938"/>
<dbReference type="eggNOG" id="COG1181">
    <property type="taxonomic scope" value="Bacteria"/>
</dbReference>
<dbReference type="HOGENOM" id="CLU_039268_0_0_9"/>
<dbReference type="OrthoDB" id="9813261at2"/>
<dbReference type="UniPathway" id="UPA00219"/>
<dbReference type="Proteomes" id="UP000002145">
    <property type="component" value="Chromosome"/>
</dbReference>
<dbReference type="GO" id="GO:0005829">
    <property type="term" value="C:cytosol"/>
    <property type="evidence" value="ECO:0007669"/>
    <property type="project" value="TreeGrafter"/>
</dbReference>
<dbReference type="GO" id="GO:0005524">
    <property type="term" value="F:ATP binding"/>
    <property type="evidence" value="ECO:0007669"/>
    <property type="project" value="UniProtKB-KW"/>
</dbReference>
<dbReference type="GO" id="GO:0008716">
    <property type="term" value="F:D-alanine-D-alanine ligase activity"/>
    <property type="evidence" value="ECO:0007669"/>
    <property type="project" value="UniProtKB-UniRule"/>
</dbReference>
<dbReference type="GO" id="GO:0046872">
    <property type="term" value="F:metal ion binding"/>
    <property type="evidence" value="ECO:0007669"/>
    <property type="project" value="UniProtKB-KW"/>
</dbReference>
<dbReference type="GO" id="GO:0071555">
    <property type="term" value="P:cell wall organization"/>
    <property type="evidence" value="ECO:0007669"/>
    <property type="project" value="UniProtKB-KW"/>
</dbReference>
<dbReference type="GO" id="GO:0009252">
    <property type="term" value="P:peptidoglycan biosynthetic process"/>
    <property type="evidence" value="ECO:0007669"/>
    <property type="project" value="UniProtKB-UniRule"/>
</dbReference>
<dbReference type="GO" id="GO:0008360">
    <property type="term" value="P:regulation of cell shape"/>
    <property type="evidence" value="ECO:0007669"/>
    <property type="project" value="UniProtKB-KW"/>
</dbReference>
<dbReference type="FunFam" id="3.30.1490.20:FF:000007">
    <property type="entry name" value="D-alanine--D-alanine ligase"/>
    <property type="match status" value="1"/>
</dbReference>
<dbReference type="FunFam" id="3.30.470.20:FF:000008">
    <property type="entry name" value="D-alanine--D-alanine ligase"/>
    <property type="match status" value="1"/>
</dbReference>
<dbReference type="Gene3D" id="3.40.50.20">
    <property type="match status" value="1"/>
</dbReference>
<dbReference type="Gene3D" id="3.30.1490.20">
    <property type="entry name" value="ATP-grasp fold, A domain"/>
    <property type="match status" value="1"/>
</dbReference>
<dbReference type="Gene3D" id="3.30.470.20">
    <property type="entry name" value="ATP-grasp fold, B domain"/>
    <property type="match status" value="1"/>
</dbReference>
<dbReference type="HAMAP" id="MF_00047">
    <property type="entry name" value="Dala_Dala_lig"/>
    <property type="match status" value="1"/>
</dbReference>
<dbReference type="InterPro" id="IPR011761">
    <property type="entry name" value="ATP-grasp"/>
</dbReference>
<dbReference type="InterPro" id="IPR013815">
    <property type="entry name" value="ATP_grasp_subdomain_1"/>
</dbReference>
<dbReference type="InterPro" id="IPR000291">
    <property type="entry name" value="D-Ala_lig_Van_CS"/>
</dbReference>
<dbReference type="InterPro" id="IPR005905">
    <property type="entry name" value="D_ala_D_ala"/>
</dbReference>
<dbReference type="InterPro" id="IPR011095">
    <property type="entry name" value="Dala_Dala_lig_C"/>
</dbReference>
<dbReference type="InterPro" id="IPR011127">
    <property type="entry name" value="Dala_Dala_lig_N"/>
</dbReference>
<dbReference type="InterPro" id="IPR016185">
    <property type="entry name" value="PreATP-grasp_dom_sf"/>
</dbReference>
<dbReference type="NCBIfam" id="TIGR01205">
    <property type="entry name" value="D_ala_D_alaTIGR"/>
    <property type="match status" value="1"/>
</dbReference>
<dbReference type="NCBIfam" id="NF002378">
    <property type="entry name" value="PRK01372.1"/>
    <property type="match status" value="1"/>
</dbReference>
<dbReference type="NCBIfam" id="NF002526">
    <property type="entry name" value="PRK01966.1-2"/>
    <property type="match status" value="1"/>
</dbReference>
<dbReference type="NCBIfam" id="NF002528">
    <property type="entry name" value="PRK01966.1-4"/>
    <property type="match status" value="1"/>
</dbReference>
<dbReference type="PANTHER" id="PTHR23132">
    <property type="entry name" value="D-ALANINE--D-ALANINE LIGASE"/>
    <property type="match status" value="1"/>
</dbReference>
<dbReference type="PANTHER" id="PTHR23132:SF25">
    <property type="entry name" value="D-ALANINE--D-ALANINE LIGASE A"/>
    <property type="match status" value="1"/>
</dbReference>
<dbReference type="Pfam" id="PF07478">
    <property type="entry name" value="Dala_Dala_lig_C"/>
    <property type="match status" value="1"/>
</dbReference>
<dbReference type="Pfam" id="PF01820">
    <property type="entry name" value="Dala_Dala_lig_N"/>
    <property type="match status" value="1"/>
</dbReference>
<dbReference type="PIRSF" id="PIRSF039102">
    <property type="entry name" value="Ddl/VanB"/>
    <property type="match status" value="1"/>
</dbReference>
<dbReference type="SUPFAM" id="SSF56059">
    <property type="entry name" value="Glutathione synthetase ATP-binding domain-like"/>
    <property type="match status" value="1"/>
</dbReference>
<dbReference type="SUPFAM" id="SSF52440">
    <property type="entry name" value="PreATP-grasp domain"/>
    <property type="match status" value="1"/>
</dbReference>
<dbReference type="PROSITE" id="PS50975">
    <property type="entry name" value="ATP_GRASP"/>
    <property type="match status" value="1"/>
</dbReference>
<dbReference type="PROSITE" id="PS00843">
    <property type="entry name" value="DALA_DALA_LIGASE_1"/>
    <property type="match status" value="1"/>
</dbReference>
<dbReference type="PROSITE" id="PS00844">
    <property type="entry name" value="DALA_DALA_LIGASE_2"/>
    <property type="match status" value="1"/>
</dbReference>
<reference key="1">
    <citation type="submission" date="2007-02" db="EMBL/GenBank/DDBJ databases">
        <title>Complete sequence of Clostridium thermocellum ATCC 27405.</title>
        <authorList>
            <consortium name="US DOE Joint Genome Institute"/>
            <person name="Copeland A."/>
            <person name="Lucas S."/>
            <person name="Lapidus A."/>
            <person name="Barry K."/>
            <person name="Detter J.C."/>
            <person name="Glavina del Rio T."/>
            <person name="Hammon N."/>
            <person name="Israni S."/>
            <person name="Dalin E."/>
            <person name="Tice H."/>
            <person name="Pitluck S."/>
            <person name="Chertkov O."/>
            <person name="Brettin T."/>
            <person name="Bruce D."/>
            <person name="Han C."/>
            <person name="Tapia R."/>
            <person name="Gilna P."/>
            <person name="Schmutz J."/>
            <person name="Larimer F."/>
            <person name="Land M."/>
            <person name="Hauser L."/>
            <person name="Kyrpides N."/>
            <person name="Mikhailova N."/>
            <person name="Wu J.H.D."/>
            <person name="Newcomb M."/>
            <person name="Richardson P."/>
        </authorList>
    </citation>
    <scope>NUCLEOTIDE SEQUENCE [LARGE SCALE GENOMIC DNA]</scope>
    <source>
        <strain>ATCC 27405 / DSM 1237 / JCM 9322 / NBRC 103400 / NCIMB 10682 / NRRL B-4536 / VPI 7372</strain>
    </source>
</reference>
<comment type="function">
    <text evidence="2">Cell wall formation.</text>
</comment>
<comment type="catalytic activity">
    <reaction evidence="2">
        <text>2 D-alanine + ATP = D-alanyl-D-alanine + ADP + phosphate + H(+)</text>
        <dbReference type="Rhea" id="RHEA:11224"/>
        <dbReference type="ChEBI" id="CHEBI:15378"/>
        <dbReference type="ChEBI" id="CHEBI:30616"/>
        <dbReference type="ChEBI" id="CHEBI:43474"/>
        <dbReference type="ChEBI" id="CHEBI:57416"/>
        <dbReference type="ChEBI" id="CHEBI:57822"/>
        <dbReference type="ChEBI" id="CHEBI:456216"/>
        <dbReference type="EC" id="6.3.2.4"/>
    </reaction>
</comment>
<comment type="cofactor">
    <cofactor evidence="1">
        <name>Mg(2+)</name>
        <dbReference type="ChEBI" id="CHEBI:18420"/>
    </cofactor>
    <cofactor evidence="1">
        <name>Mn(2+)</name>
        <dbReference type="ChEBI" id="CHEBI:29035"/>
    </cofactor>
    <text evidence="1">Binds 2 magnesium or manganese ions per subunit.</text>
</comment>
<comment type="pathway">
    <text evidence="2">Cell wall biogenesis; peptidoglycan biosynthesis.</text>
</comment>
<comment type="subcellular location">
    <subcellularLocation>
        <location evidence="2">Cytoplasm</location>
    </subcellularLocation>
</comment>
<comment type="similarity">
    <text evidence="2">Belongs to the D-alanine--D-alanine ligase family.</text>
</comment>
<organism>
    <name type="scientific">Acetivibrio thermocellus (strain ATCC 27405 / DSM 1237 / JCM 9322 / NBRC 103400 / NCIMB 10682 / NRRL B-4536 / VPI 7372)</name>
    <name type="common">Clostridium thermocellum</name>
    <dbReference type="NCBI Taxonomy" id="203119"/>
    <lineage>
        <taxon>Bacteria</taxon>
        <taxon>Bacillati</taxon>
        <taxon>Bacillota</taxon>
        <taxon>Clostridia</taxon>
        <taxon>Eubacteriales</taxon>
        <taxon>Oscillospiraceae</taxon>
        <taxon>Acetivibrio</taxon>
    </lineage>
</organism>
<gene>
    <name evidence="2" type="primary">ddl</name>
    <name type="ordered locus">Cthe_1938</name>
</gene>
<evidence type="ECO:0000250" key="1"/>
<evidence type="ECO:0000255" key="2">
    <source>
        <dbReference type="HAMAP-Rule" id="MF_00047"/>
    </source>
</evidence>
<accession>A3DGS7</accession>
<sequence length="376" mass="41923">MGDKKRVLVIFGGQSSEHEVSRISATSILKNINLDKFDVSMIGITKDGKWLYYDGPIDKIPSGEWEEIALKDGTRSIADRVSLFDNIISCKNNACGLEKASENEKSKKIDVVFPVLHGCNGEDGTIQGLFELAGIPYVGCGVLASAVGMDKIYAKIIFEKAGIPQADYLYFTRKEIYGDVEGVVDKIEEKFSYPVFVKPSNAGSSVGVSKAHDKNELKEALIYAARYDRKVLIEEFINGREVECAVLGNDDPVASTVGEIIPGNEFYDYKAKYIENTSKIKIPADLPEETVEQIRNYAVKAFKALDCSGLARVDFFVHKETGKVYINEINTMPGFTSISMYPMLWEESGISYPELIEKLIDLAVQRYNDNLKEYDE</sequence>
<feature type="chain" id="PRO_0000341083" description="D-alanine--D-alanine ligase">
    <location>
        <begin position="1"/>
        <end position="376"/>
    </location>
</feature>
<feature type="domain" description="ATP-grasp" evidence="2">
    <location>
        <begin position="155"/>
        <end position="361"/>
    </location>
</feature>
<feature type="binding site" evidence="2">
    <location>
        <begin position="188"/>
        <end position="243"/>
    </location>
    <ligand>
        <name>ATP</name>
        <dbReference type="ChEBI" id="CHEBI:30616"/>
    </ligand>
</feature>
<feature type="binding site" evidence="2">
    <location>
        <position position="314"/>
    </location>
    <ligand>
        <name>Mg(2+)</name>
        <dbReference type="ChEBI" id="CHEBI:18420"/>
        <label>1</label>
    </ligand>
</feature>
<feature type="binding site" evidence="2">
    <location>
        <position position="328"/>
    </location>
    <ligand>
        <name>Mg(2+)</name>
        <dbReference type="ChEBI" id="CHEBI:18420"/>
        <label>1</label>
    </ligand>
</feature>
<feature type="binding site" evidence="2">
    <location>
        <position position="328"/>
    </location>
    <ligand>
        <name>Mg(2+)</name>
        <dbReference type="ChEBI" id="CHEBI:18420"/>
        <label>2</label>
    </ligand>
</feature>
<feature type="binding site" evidence="2">
    <location>
        <position position="330"/>
    </location>
    <ligand>
        <name>Mg(2+)</name>
        <dbReference type="ChEBI" id="CHEBI:18420"/>
        <label>2</label>
    </ligand>
</feature>
<protein>
    <recommendedName>
        <fullName evidence="2">D-alanine--D-alanine ligase</fullName>
        <ecNumber evidence="2">6.3.2.4</ecNumber>
    </recommendedName>
    <alternativeName>
        <fullName evidence="2">D-Ala-D-Ala ligase</fullName>
    </alternativeName>
    <alternativeName>
        <fullName evidence="2">D-alanylalanine synthetase</fullName>
    </alternativeName>
</protein>
<name>DDL_ACET2</name>